<name>REPA_PASVK</name>
<accession>Q00338</accession>
<proteinExistence type="inferred from homology"/>
<feature type="chain" id="PRO_0000222209" description="Replication-associated protein A">
    <location>
        <begin position="1"/>
        <end position="323"/>
    </location>
</feature>
<feature type="domain" description="CRESS-DNA virus Rep endonuclease" evidence="2">
    <location>
        <begin position="18"/>
        <end position="121"/>
    </location>
</feature>
<feature type="region of interest" description="Oligomerization" evidence="1">
    <location>
        <begin position="181"/>
        <end position="193"/>
    </location>
</feature>
<feature type="region of interest" description="Disordered" evidence="3">
    <location>
        <begin position="256"/>
        <end position="286"/>
    </location>
</feature>
<feature type="short sequence motif" description="RCR-1" evidence="2">
    <location>
        <begin position="25"/>
        <end position="28"/>
    </location>
</feature>
<feature type="short sequence motif" description="RCR-2" evidence="2">
    <location>
        <begin position="67"/>
        <end position="69"/>
    </location>
</feature>
<feature type="short sequence motif" description="RCR-3" evidence="2">
    <location>
        <begin position="107"/>
        <end position="110"/>
    </location>
</feature>
<feature type="short sequence motif" description="LXCXE motif, interaction with host RBR1">
    <location>
        <begin position="204"/>
        <end position="208"/>
    </location>
</feature>
<feature type="active site" description="For DNA cleavage activity" evidence="2">
    <location>
        <position position="107"/>
    </location>
</feature>
<feature type="binding site" evidence="2">
    <location>
        <position position="59"/>
    </location>
    <ligand>
        <name>a divalent metal cation</name>
        <dbReference type="ChEBI" id="CHEBI:60240"/>
    </ligand>
</feature>
<feature type="binding site" evidence="2">
    <location>
        <position position="67"/>
    </location>
    <ligand>
        <name>a divalent metal cation</name>
        <dbReference type="ChEBI" id="CHEBI:60240"/>
    </ligand>
</feature>
<feature type="binding site" evidence="2">
    <location>
        <position position="69"/>
    </location>
    <ligand>
        <name>a divalent metal cation</name>
        <dbReference type="ChEBI" id="CHEBI:60240"/>
    </ligand>
</feature>
<feature type="binding site" evidence="2">
    <location>
        <position position="111"/>
    </location>
    <ligand>
        <name>a divalent metal cation</name>
        <dbReference type="ChEBI" id="CHEBI:60240"/>
    </ligand>
</feature>
<organismHost>
    <name type="scientific">Megathyrsus maximus</name>
    <dbReference type="NCBI Taxonomy" id="59788"/>
</organismHost>
<reference key="1">
    <citation type="journal article" date="1992" name="J. Gen. Virol.">
        <title>The nucleotide sequence of an infectious insect-transmissible clone of the geminivirus Panicum streak virus.</title>
        <authorList>
            <person name="Briddon R.W."/>
            <person name="Lunness P."/>
            <person name="Chamberlain L.C."/>
            <person name="Brundish H."/>
            <person name="Pinner M.S."/>
            <person name="Markham P.G."/>
        </authorList>
    </citation>
    <scope>NUCLEOTIDE SEQUENCE [GENOMIC DNA]</scope>
</reference>
<gene>
    <name type="ORF">C1</name>
</gene>
<evidence type="ECO:0000250" key="1"/>
<evidence type="ECO:0000255" key="2">
    <source>
        <dbReference type="PROSITE-ProRule" id="PRU01364"/>
    </source>
</evidence>
<evidence type="ECO:0000256" key="3">
    <source>
        <dbReference type="SAM" id="MobiDB-lite"/>
    </source>
</evidence>
<evidence type="ECO:0000305" key="4"/>
<protein>
    <recommendedName>
        <fullName>Replication-associated protein A</fullName>
        <shortName>RepA</shortName>
        <ecNumber>3.1.21.-</ecNumber>
    </recommendedName>
</protein>
<sequence>MSTVGSSSEGRHSVRCFRHRNANTFLTYSKCPLEPEFIGEHLFRLTREYEPAYILVVRETHTDGTWHCHALLQCIKPCTTRDERYFDIDRYHGNIQSAKSTDKVREYILKDPKDKWEKGTYIPRKKSFVPPGKEPAEKKPTKDEVMREIMTHATSREEYLSLVQSSLPYDWATKLNYFEYSASRLFPDIAEPYTNPHPTTEYDLHCNETIEDWLKPNIYQVSPQAYKLLEPSCLSLEQAIADLEWLDDTTRMLQEKEREASTSAAQHGQVKHPGLEASDDTTTGKTISTGLHMMKKLSTMSLTTFPSSSVRAGNDSSAAKKTT</sequence>
<dbReference type="EC" id="3.1.21.-"/>
<dbReference type="EMBL" id="X60168">
    <property type="protein sequence ID" value="CAA42735.1"/>
    <property type="molecule type" value="Genomic_DNA"/>
</dbReference>
<dbReference type="PIR" id="JQ1552">
    <property type="entry name" value="JQ1552"/>
</dbReference>
<dbReference type="SMR" id="Q00338"/>
<dbReference type="Proteomes" id="UP000007896">
    <property type="component" value="Genome"/>
</dbReference>
<dbReference type="GO" id="GO:0030430">
    <property type="term" value="C:host cell cytoplasm"/>
    <property type="evidence" value="ECO:0007669"/>
    <property type="project" value="UniProtKB-SubCell"/>
</dbReference>
<dbReference type="GO" id="GO:0042025">
    <property type="term" value="C:host cell nucleus"/>
    <property type="evidence" value="ECO:0007669"/>
    <property type="project" value="UniProtKB-SubCell"/>
</dbReference>
<dbReference type="GO" id="GO:0003677">
    <property type="term" value="F:DNA binding"/>
    <property type="evidence" value="ECO:0007669"/>
    <property type="project" value="UniProtKB-KW"/>
</dbReference>
<dbReference type="GO" id="GO:0016888">
    <property type="term" value="F:endodeoxyribonuclease activity, producing 5'-phosphomonoesters"/>
    <property type="evidence" value="ECO:0007669"/>
    <property type="project" value="InterPro"/>
</dbReference>
<dbReference type="GO" id="GO:0046872">
    <property type="term" value="F:metal ion binding"/>
    <property type="evidence" value="ECO:0007669"/>
    <property type="project" value="UniProtKB-KW"/>
</dbReference>
<dbReference type="GO" id="GO:0000166">
    <property type="term" value="F:nucleotide binding"/>
    <property type="evidence" value="ECO:0007669"/>
    <property type="project" value="UniProtKB-KW"/>
</dbReference>
<dbReference type="GO" id="GO:0016779">
    <property type="term" value="F:nucleotidyltransferase activity"/>
    <property type="evidence" value="ECO:0007669"/>
    <property type="project" value="UniProtKB-KW"/>
</dbReference>
<dbReference type="GO" id="GO:0005198">
    <property type="term" value="F:structural molecule activity"/>
    <property type="evidence" value="ECO:0007669"/>
    <property type="project" value="InterPro"/>
</dbReference>
<dbReference type="GO" id="GO:0006260">
    <property type="term" value="P:DNA replication"/>
    <property type="evidence" value="ECO:0007669"/>
    <property type="project" value="UniProtKB-KW"/>
</dbReference>
<dbReference type="GO" id="GO:0039645">
    <property type="term" value="P:symbiont-mediated perturbation of host cell cycle G1/S transition checkpoint"/>
    <property type="evidence" value="ECO:0007669"/>
    <property type="project" value="UniProtKB-KW"/>
</dbReference>
<dbReference type="Gene3D" id="3.40.1310.20">
    <property type="match status" value="1"/>
</dbReference>
<dbReference type="InterPro" id="IPR049912">
    <property type="entry name" value="CRESS_DNA_REP"/>
</dbReference>
<dbReference type="InterPro" id="IPR001146">
    <property type="entry name" value="Gemini_AL1_MSV"/>
</dbReference>
<dbReference type="InterPro" id="IPR001191">
    <property type="entry name" value="Gemini_AL1_REP"/>
</dbReference>
<dbReference type="InterPro" id="IPR022692">
    <property type="entry name" value="Gemini_AL1_REP_central"/>
</dbReference>
<dbReference type="Pfam" id="PF00799">
    <property type="entry name" value="Gemini_AL1"/>
    <property type="match status" value="1"/>
</dbReference>
<dbReference type="Pfam" id="PF08283">
    <property type="entry name" value="Gemini_AL1_M"/>
    <property type="match status" value="1"/>
</dbReference>
<dbReference type="PRINTS" id="PR00227">
    <property type="entry name" value="GEMCOATAL1"/>
</dbReference>
<dbReference type="PRINTS" id="PR00229">
    <property type="entry name" value="GEMCOATMSVL1"/>
</dbReference>
<dbReference type="SUPFAM" id="SSF55464">
    <property type="entry name" value="Origin of replication-binding domain, RBD-like"/>
    <property type="match status" value="1"/>
</dbReference>
<dbReference type="PROSITE" id="PS52020">
    <property type="entry name" value="CRESS_DNA_REP"/>
    <property type="match status" value="1"/>
</dbReference>
<keyword id="KW-0010">Activator</keyword>
<keyword id="KW-0025">Alternative splicing</keyword>
<keyword id="KW-0190">Covalent protein-DNA linkage</keyword>
<keyword id="KW-0235">DNA replication</keyword>
<keyword id="KW-0238">DNA-binding</keyword>
<keyword id="KW-0255">Endonuclease</keyword>
<keyword id="KW-1078">G1/S host cell cycle checkpoint dysregulation by virus</keyword>
<keyword id="KW-1035">Host cytoplasm</keyword>
<keyword id="KW-1048">Host nucleus</keyword>
<keyword id="KW-0945">Host-virus interaction</keyword>
<keyword id="KW-0378">Hydrolase</keyword>
<keyword id="KW-0479">Metal-binding</keyword>
<keyword id="KW-1121">Modulation of host cell cycle by virus</keyword>
<keyword id="KW-0540">Nuclease</keyword>
<keyword id="KW-0547">Nucleotide-binding</keyword>
<keyword id="KW-0548">Nucleotidyltransferase</keyword>
<keyword id="KW-1185">Reference proteome</keyword>
<keyword id="KW-0678">Repressor</keyword>
<keyword id="KW-0808">Transferase</keyword>
<comment type="function">
    <text evidence="1">Implicated in enhancement of V-sense gene expression. Acts a an inhibitor of C-sense gene transcription (By similarity).</text>
</comment>
<comment type="cofactor">
    <cofactor evidence="2">
        <name>Mg(2+)</name>
        <dbReference type="ChEBI" id="CHEBI:18420"/>
    </cofactor>
    <cofactor evidence="2">
        <name>Mn(2+)</name>
        <dbReference type="ChEBI" id="CHEBI:29035"/>
    </cofactor>
    <text evidence="2">Divalent metal cations, possibly Mg(2+) or Mn(2+).</text>
</comment>
<comment type="subunit">
    <text evidence="1">Homooligomer. Interacts (via LXCXE domain) with host retinoblastoma-related protein 1 (RBR1), and may thereby deregulate the host cell cycle. Part of the C- and V-complexes which are RepA-Rep-DNA complexes involved in the c-sense and v-sense transcription (By similarity).</text>
</comment>
<comment type="subcellular location">
    <subcellularLocation>
        <location evidence="1">Host nucleus</location>
    </subcellularLocation>
    <subcellularLocation>
        <location evidence="1">Host cytoplasm</location>
    </subcellularLocation>
</comment>
<comment type="alternative products">
    <event type="alternative splicing"/>
    <isoform>
        <id>Q00338-1</id>
        <name>RepA</name>
        <sequence type="displayed"/>
    </isoform>
    <isoform>
        <id>P0C647-1</id>
        <name>Rep</name>
        <sequence type="external"/>
    </isoform>
</comment>
<comment type="domain">
    <text>There are 3 rolling circle replication (RCR) motifs. RCR-2 may be involved in metal coordination. RCR-3 is required for phosphodiester bond cleavage for initiation of RCR.</text>
</comment>
<comment type="domain">
    <text evidence="1">The LXCXE motif specifically binds to host RBR1.</text>
</comment>
<comment type="miscellaneous">
    <molecule>Isoform RepA</molecule>
    <text>Produced from the unspliced transcript.</text>
</comment>
<comment type="similarity">
    <text evidence="4">Belongs to the geminiviridae Rep protein family.</text>
</comment>
<organism>
    <name type="scientific">Panicum streak virus (isolate Kenya)</name>
    <name type="common">PanSV</name>
    <dbReference type="NCBI Taxonomy" id="268780"/>
    <lineage>
        <taxon>Viruses</taxon>
        <taxon>Monodnaviria</taxon>
        <taxon>Shotokuvirae</taxon>
        <taxon>Cressdnaviricota</taxon>
        <taxon>Repensiviricetes</taxon>
        <taxon>Geplafuvirales</taxon>
        <taxon>Geminiviridae</taxon>
        <taxon>Mastrevirus</taxon>
        <taxon>Panicum streak virus</taxon>
    </lineage>
</organism>